<accession>Q9QYS1</accession>
<accession>Q14BF7</accession>
<name>WNT16_MOUSE</name>
<organism>
    <name type="scientific">Mus musculus</name>
    <name type="common">Mouse</name>
    <dbReference type="NCBI Taxonomy" id="10090"/>
    <lineage>
        <taxon>Eukaryota</taxon>
        <taxon>Metazoa</taxon>
        <taxon>Chordata</taxon>
        <taxon>Craniata</taxon>
        <taxon>Vertebrata</taxon>
        <taxon>Euteleostomi</taxon>
        <taxon>Mammalia</taxon>
        <taxon>Eutheria</taxon>
        <taxon>Euarchontoglires</taxon>
        <taxon>Glires</taxon>
        <taxon>Rodentia</taxon>
        <taxon>Myomorpha</taxon>
        <taxon>Muroidea</taxon>
        <taxon>Muridae</taxon>
        <taxon>Murinae</taxon>
        <taxon>Mus</taxon>
        <taxon>Mus</taxon>
    </lineage>
</organism>
<dbReference type="EMBL" id="AF172064">
    <property type="protein sequence ID" value="AAD49352.2"/>
    <property type="molecule type" value="Genomic_DNA"/>
</dbReference>
<dbReference type="EMBL" id="AF169964">
    <property type="protein sequence ID" value="AAD49352.2"/>
    <property type="status" value="JOINED"/>
    <property type="molecule type" value="Genomic_DNA"/>
</dbReference>
<dbReference type="EMBL" id="CH466533">
    <property type="protein sequence ID" value="EDL13846.1"/>
    <property type="molecule type" value="Genomic_DNA"/>
</dbReference>
<dbReference type="EMBL" id="BC115811">
    <property type="protein sequence ID" value="AAI15812.1"/>
    <property type="molecule type" value="mRNA"/>
</dbReference>
<dbReference type="EMBL" id="BC115925">
    <property type="protein sequence ID" value="AAI15926.1"/>
    <property type="molecule type" value="mRNA"/>
</dbReference>
<dbReference type="CCDS" id="CCDS19936.1"/>
<dbReference type="RefSeq" id="NP_444346.3">
    <property type="nucleotide sequence ID" value="NM_053116.4"/>
</dbReference>
<dbReference type="SMR" id="Q9QYS1"/>
<dbReference type="FunCoup" id="Q9QYS1">
    <property type="interactions" value="706"/>
</dbReference>
<dbReference type="STRING" id="10090.ENSMUSP00000031681"/>
<dbReference type="GlyCosmos" id="Q9QYS1">
    <property type="glycosylation" value="3 sites, No reported glycans"/>
</dbReference>
<dbReference type="GlyGen" id="Q9QYS1">
    <property type="glycosylation" value="3 sites"/>
</dbReference>
<dbReference type="PhosphoSitePlus" id="Q9QYS1"/>
<dbReference type="PaxDb" id="10090-ENSMUSP00000031681"/>
<dbReference type="ProteomicsDB" id="297853"/>
<dbReference type="Antibodypedia" id="17566">
    <property type="antibodies" value="212 antibodies from 33 providers"/>
</dbReference>
<dbReference type="DNASU" id="93735"/>
<dbReference type="Ensembl" id="ENSMUST00000031681.10">
    <property type="protein sequence ID" value="ENSMUSP00000031681.4"/>
    <property type="gene ID" value="ENSMUSG00000029671.16"/>
</dbReference>
<dbReference type="GeneID" id="93735"/>
<dbReference type="KEGG" id="mmu:93735"/>
<dbReference type="UCSC" id="uc009bax.2">
    <property type="organism name" value="mouse"/>
</dbReference>
<dbReference type="AGR" id="MGI:2136018"/>
<dbReference type="CTD" id="51384"/>
<dbReference type="MGI" id="MGI:2136018">
    <property type="gene designation" value="Wnt16"/>
</dbReference>
<dbReference type="VEuPathDB" id="HostDB:ENSMUSG00000029671"/>
<dbReference type="eggNOG" id="KOG3913">
    <property type="taxonomic scope" value="Eukaryota"/>
</dbReference>
<dbReference type="GeneTree" id="ENSGT00940000157480"/>
<dbReference type="HOGENOM" id="CLU_033039_1_0_1"/>
<dbReference type="InParanoid" id="Q9QYS1"/>
<dbReference type="OMA" id="TCWLQMP"/>
<dbReference type="OrthoDB" id="5945655at2759"/>
<dbReference type="PhylomeDB" id="Q9QYS1"/>
<dbReference type="TreeFam" id="TF105310"/>
<dbReference type="Reactome" id="R-MMU-3238698">
    <property type="pathway name" value="WNT ligand biogenesis and trafficking"/>
</dbReference>
<dbReference type="BioGRID-ORCS" id="93735">
    <property type="hits" value="1 hit in 78 CRISPR screens"/>
</dbReference>
<dbReference type="PRO" id="PR:Q9QYS1"/>
<dbReference type="Proteomes" id="UP000000589">
    <property type="component" value="Chromosome 6"/>
</dbReference>
<dbReference type="RNAct" id="Q9QYS1">
    <property type="molecule type" value="protein"/>
</dbReference>
<dbReference type="Bgee" id="ENSMUSG00000029671">
    <property type="expression patterns" value="Expressed in secondary palatal shelf mesenchyme and 95 other cell types or tissues"/>
</dbReference>
<dbReference type="ExpressionAtlas" id="Q9QYS1">
    <property type="expression patterns" value="baseline and differential"/>
</dbReference>
<dbReference type="GO" id="GO:0005737">
    <property type="term" value="C:cytoplasm"/>
    <property type="evidence" value="ECO:0007669"/>
    <property type="project" value="Ensembl"/>
</dbReference>
<dbReference type="GO" id="GO:0005615">
    <property type="term" value="C:extracellular space"/>
    <property type="evidence" value="ECO:0007669"/>
    <property type="project" value="Ensembl"/>
</dbReference>
<dbReference type="GO" id="GO:0005102">
    <property type="term" value="F:signaling receptor binding"/>
    <property type="evidence" value="ECO:0007669"/>
    <property type="project" value="InterPro"/>
</dbReference>
<dbReference type="GO" id="GO:0046849">
    <property type="term" value="P:bone remodeling"/>
    <property type="evidence" value="ECO:0000315"/>
    <property type="project" value="MGI"/>
</dbReference>
<dbReference type="GO" id="GO:0060317">
    <property type="term" value="P:cardiac epithelial to mesenchymal transition"/>
    <property type="evidence" value="ECO:0000315"/>
    <property type="project" value="MGI"/>
</dbReference>
<dbReference type="GO" id="GO:0030216">
    <property type="term" value="P:keratinocyte differentiation"/>
    <property type="evidence" value="ECO:0007669"/>
    <property type="project" value="Ensembl"/>
</dbReference>
<dbReference type="GO" id="GO:0043616">
    <property type="term" value="P:keratinocyte proliferation"/>
    <property type="evidence" value="ECO:0007669"/>
    <property type="project" value="Ensembl"/>
</dbReference>
<dbReference type="GO" id="GO:2001234">
    <property type="term" value="P:negative regulation of apoptotic signaling pathway"/>
    <property type="evidence" value="ECO:0007669"/>
    <property type="project" value="Ensembl"/>
</dbReference>
<dbReference type="GO" id="GO:0090403">
    <property type="term" value="P:oxidative stress-induced premature senescence"/>
    <property type="evidence" value="ECO:0007669"/>
    <property type="project" value="Ensembl"/>
</dbReference>
<dbReference type="GO" id="GO:0010628">
    <property type="term" value="P:positive regulation of gene expression"/>
    <property type="evidence" value="ECO:0007669"/>
    <property type="project" value="Ensembl"/>
</dbReference>
<dbReference type="GO" id="GO:0046330">
    <property type="term" value="P:positive regulation of JNK cascade"/>
    <property type="evidence" value="ECO:0007669"/>
    <property type="project" value="Ensembl"/>
</dbReference>
<dbReference type="GO" id="GO:0051897">
    <property type="term" value="P:positive regulation of phosphatidylinositol 3-kinase/protein kinase B signal transduction"/>
    <property type="evidence" value="ECO:0007669"/>
    <property type="project" value="Ensembl"/>
</dbReference>
<dbReference type="GO" id="GO:0090399">
    <property type="term" value="P:replicative senescence"/>
    <property type="evidence" value="ECO:0007669"/>
    <property type="project" value="Ensembl"/>
</dbReference>
<dbReference type="GO" id="GO:0016055">
    <property type="term" value="P:Wnt signaling pathway"/>
    <property type="evidence" value="ECO:0007669"/>
    <property type="project" value="UniProtKB-KW"/>
</dbReference>
<dbReference type="CDD" id="cd19344">
    <property type="entry name" value="Wnt_Wnt16"/>
    <property type="match status" value="1"/>
</dbReference>
<dbReference type="FunFam" id="3.30.2460.20:FF:000001">
    <property type="entry name" value="Wnt homolog"/>
    <property type="match status" value="1"/>
</dbReference>
<dbReference type="Gene3D" id="3.30.2460.20">
    <property type="match status" value="1"/>
</dbReference>
<dbReference type="InterPro" id="IPR005817">
    <property type="entry name" value="Wnt"/>
</dbReference>
<dbReference type="InterPro" id="IPR013304">
    <property type="entry name" value="Wnt16"/>
</dbReference>
<dbReference type="InterPro" id="IPR043158">
    <property type="entry name" value="Wnt_C"/>
</dbReference>
<dbReference type="InterPro" id="IPR018161">
    <property type="entry name" value="Wnt_CS"/>
</dbReference>
<dbReference type="PANTHER" id="PTHR12027:SF70">
    <property type="entry name" value="PROTEIN WNT-16"/>
    <property type="match status" value="1"/>
</dbReference>
<dbReference type="PANTHER" id="PTHR12027">
    <property type="entry name" value="WNT RELATED"/>
    <property type="match status" value="1"/>
</dbReference>
<dbReference type="Pfam" id="PF00110">
    <property type="entry name" value="wnt"/>
    <property type="match status" value="1"/>
</dbReference>
<dbReference type="PRINTS" id="PR01895">
    <property type="entry name" value="WNT16PROTEIN"/>
</dbReference>
<dbReference type="PRINTS" id="PR01349">
    <property type="entry name" value="WNTPROTEIN"/>
</dbReference>
<dbReference type="SMART" id="SM00097">
    <property type="entry name" value="WNT1"/>
    <property type="match status" value="1"/>
</dbReference>
<dbReference type="PROSITE" id="PS00246">
    <property type="entry name" value="WNT1"/>
    <property type="match status" value="1"/>
</dbReference>
<evidence type="ECO:0000250" key="1"/>
<evidence type="ECO:0000250" key="2">
    <source>
        <dbReference type="UniProtKB" id="P27467"/>
    </source>
</evidence>
<evidence type="ECO:0000250" key="3">
    <source>
        <dbReference type="UniProtKB" id="P28026"/>
    </source>
</evidence>
<evidence type="ECO:0000250" key="4">
    <source>
        <dbReference type="UniProtKB" id="P56704"/>
    </source>
</evidence>
<evidence type="ECO:0000255" key="5"/>
<evidence type="ECO:0000305" key="6"/>
<keyword id="KW-0217">Developmental protein</keyword>
<keyword id="KW-1015">Disulfide bond</keyword>
<keyword id="KW-0272">Extracellular matrix</keyword>
<keyword id="KW-0325">Glycoprotein</keyword>
<keyword id="KW-0449">Lipoprotein</keyword>
<keyword id="KW-1185">Reference proteome</keyword>
<keyword id="KW-0964">Secreted</keyword>
<keyword id="KW-0732">Signal</keyword>
<keyword id="KW-0879">Wnt signaling pathway</keyword>
<gene>
    <name type="primary">Wnt16</name>
</gene>
<sequence>MDRAALLALPSLCALWAAVLSLLPCGTQGNWMWLGIASFGVPEKLGCADLPLNSRQKELCKRKPYLLPSIREGARLGIQECRSQFRHERWNCMVATTTSTQLATAPLFGYELSSGTKETAFIYAIMAAGLVHSVTRSCSAGNMTECSCDTTLQNGGSPSEGWHWGGCSDDVQYGMWFSRKFLDLPIRNTTGKESRVLLAMNLHNNEAGRQAVAKLMSVDCRCHGVSGSCAVKTCWKTMSSFEKIGHFLKDKYENSIQISDKTKRKMRRREKDQRQTPILKDDLLYVHKSPNYCVENKKLGIPGTQGRECNRTSGGADGCNLLCCGRGYNTHVVRHVERCECKFIWCCYVRCRRCESMTDVHTCK</sequence>
<reference key="1">
    <citation type="journal article" date="1999" name="Proc. Natl. Acad. Sci. U.S.A.">
        <title>Oncogenic homeodomain transcription factor E2A-Pbx1 activates a novel WNT gene in pre-B acute lymphoblastoid leukemia.</title>
        <authorList>
            <person name="McWhirter J.R."/>
            <person name="Neuteboom S.T."/>
            <person name="Wancewicz E.V."/>
            <person name="Monia B.P."/>
            <person name="Downing J.R."/>
            <person name="Murre C."/>
        </authorList>
    </citation>
    <scope>NUCLEOTIDE SEQUENCE [GENOMIC DNA]</scope>
    <source>
        <strain>129/SvJ</strain>
    </source>
</reference>
<reference key="2">
    <citation type="submission" date="2005-09" db="EMBL/GenBank/DDBJ databases">
        <authorList>
            <person name="Mural R.J."/>
            <person name="Adams M.D."/>
            <person name="Myers E.W."/>
            <person name="Smith H.O."/>
            <person name="Venter J.C."/>
        </authorList>
    </citation>
    <scope>NUCLEOTIDE SEQUENCE [LARGE SCALE GENOMIC DNA]</scope>
</reference>
<reference key="3">
    <citation type="journal article" date="2004" name="Genome Res.">
        <title>The status, quality, and expansion of the NIH full-length cDNA project: the Mammalian Gene Collection (MGC).</title>
        <authorList>
            <consortium name="The MGC Project Team"/>
        </authorList>
    </citation>
    <scope>NUCLEOTIDE SEQUENCE [LARGE SCALE MRNA]</scope>
</reference>
<protein>
    <recommendedName>
        <fullName>Protein Wnt-16</fullName>
    </recommendedName>
</protein>
<feature type="signal peptide" evidence="5">
    <location>
        <begin position="1"/>
        <end position="29"/>
    </location>
</feature>
<feature type="chain" id="PRO_0000041472" description="Protein Wnt-16">
    <location>
        <begin position="30"/>
        <end position="364"/>
    </location>
</feature>
<feature type="lipid moiety-binding region" description="O-palmitoleoyl serine; by PORCN" evidence="4">
    <location>
        <position position="226"/>
    </location>
</feature>
<feature type="glycosylation site" description="N-linked (GlcNAc...) asparagine" evidence="5">
    <location>
        <position position="142"/>
    </location>
</feature>
<feature type="glycosylation site" description="N-linked (GlcNAc...) asparagine" evidence="5">
    <location>
        <position position="188"/>
    </location>
</feature>
<feature type="glycosylation site" description="N-linked (GlcNAc...) asparagine" evidence="5">
    <location>
        <position position="310"/>
    </location>
</feature>
<feature type="disulfide bond" evidence="3">
    <location>
        <begin position="81"/>
        <end position="92"/>
    </location>
</feature>
<feature type="disulfide bond" evidence="3">
    <location>
        <begin position="138"/>
        <end position="146"/>
    </location>
</feature>
<feature type="disulfide bond" evidence="3">
    <location>
        <begin position="148"/>
        <end position="167"/>
    </location>
</feature>
<feature type="disulfide bond" evidence="3">
    <location>
        <begin position="220"/>
        <end position="234"/>
    </location>
</feature>
<feature type="disulfide bond" evidence="3">
    <location>
        <begin position="222"/>
        <end position="229"/>
    </location>
</feature>
<feature type="disulfide bond" evidence="3">
    <location>
        <begin position="293"/>
        <end position="324"/>
    </location>
</feature>
<feature type="disulfide bond" evidence="3">
    <location>
        <begin position="309"/>
        <end position="319"/>
    </location>
</feature>
<feature type="disulfide bond" evidence="3">
    <location>
        <begin position="323"/>
        <end position="363"/>
    </location>
</feature>
<feature type="disulfide bond" evidence="3">
    <location>
        <begin position="339"/>
        <end position="354"/>
    </location>
</feature>
<feature type="disulfide bond" evidence="3">
    <location>
        <begin position="341"/>
        <end position="351"/>
    </location>
</feature>
<feature type="disulfide bond" evidence="3">
    <location>
        <begin position="346"/>
        <end position="347"/>
    </location>
</feature>
<feature type="sequence conflict" description="In Ref. 1; AAD49352." evidence="6" ref="1">
    <original>K</original>
    <variation>N</variation>
    <location>
        <position position="265"/>
    </location>
</feature>
<comment type="function">
    <text evidence="1">Ligand for members of the frizzled family of seven transmembrane receptors. Probable developmental protein. May be a signaling molecule which affects the development of discrete regions of tissues. Is likely to signal over only few cell diameters (By similarity).</text>
</comment>
<comment type="subcellular location">
    <subcellularLocation>
        <location>Secreted</location>
        <location>Extracellular space</location>
        <location>Extracellular matrix</location>
    </subcellularLocation>
</comment>
<comment type="PTM">
    <text evidence="2 4">Palmitoleoylation is required for efficient binding to frizzled receptors. Depalmitoleoylation leads to Wnt signaling pathway inhibition.</text>
</comment>
<comment type="similarity">
    <text evidence="6">Belongs to the Wnt family.</text>
</comment>
<proteinExistence type="evidence at transcript level"/>